<comment type="function">
    <text evidence="3">Nonribisomal peptide synthetase; part of the gene cluster that mediates the biosynthesis of benzomalvin A and D (PubMed:28604695). The pathway begins with the loading of amino acid precursors onto the A domains of the non ribosomal peptide synthetases benY and benZ (PubMed:28604695). BenY and the A1 domain of benZ are loaded with anthranilate (Anth), while the A2 domain of benZ is loaded with phenylalanine (Phe) (PubMed:28604695). N-methylation of Phe by the methyltransferase benX may happen before loading of Phe onto benZ, after loading of Phe, or after dipeptide formation (PubMed:28604695). Condensation of Anth with the secondary amine of NmPhe or Phe is catalyzed by the C1 domain of benZ, forming a dipeptide intermediate (PubMed:28604695). This is followed by in trans condensation of the Anth-NmPhe dipeptide with Anth bound to the T domain of benY by the C2 domain of benZ to form the linear tripeptide Anth-NmPhe-Anth (PubMed:28604695). Cyclization and release of the tripeptide is then catalyzed by the C-terminal C domain of benY and the resulting 11-member macrocyclic intermediate is expected to spontaneously collapse to form the benzodiazepine core (PubMed:28604695). Benzomalvin A is in conformational equilibrium with its atropisomer, benzomalvin D (PubMed:28604695).</text>
</comment>
<comment type="pathway">
    <text evidence="3">Secondary metabolite biosynthesis.</text>
</comment>
<comment type="domain">
    <text evidence="6">NRP synthetases are composed of discrete domains (adenylation (A), thiolation (T) or peptidyl carrier protein (PCP) and condensation (C) domains) which when grouped together are referred to as a single module. Each module is responsible for the recognition (via the A domain) and incorporation of a single amino acid into the growing peptide product. Thus, an NRP synthetase is generally composed of one or more modules and can terminate in a thioesterase domain (TE) that releases the newly synthesized peptide from the enzyme. Occasionally, epimerase (E) domains (responsible for L- to D-amino acid conversion) are present within the NRP synthetase. BenY as the following monomodular architecture: A-T-C.</text>
</comment>
<comment type="disruption phenotype">
    <text evidence="3">Leads to the accumulation of the benzomalvin dipeptide precursor anthranilate-N-methylphenylalanine (Anth-NmPhe).</text>
</comment>
<comment type="similarity">
    <text evidence="5">Belongs to the NRP synthetase family.</text>
</comment>
<evidence type="ECO:0000255" key="1"/>
<evidence type="ECO:0000255" key="2">
    <source>
        <dbReference type="PROSITE-ProRule" id="PRU00258"/>
    </source>
</evidence>
<evidence type="ECO:0000269" key="3">
    <source>
    </source>
</evidence>
<evidence type="ECO:0000303" key="4">
    <source>
    </source>
</evidence>
<evidence type="ECO:0000305" key="5"/>
<evidence type="ECO:0000305" key="6">
    <source>
    </source>
</evidence>
<keyword id="KW-0436">Ligase</keyword>
<keyword id="KW-0596">Phosphopantetheine</keyword>
<keyword id="KW-0597">Phosphoprotein</keyword>
<dbReference type="EC" id="6.3.1.-" evidence="6"/>
<dbReference type="EMBL" id="KX449366">
    <property type="protein sequence ID" value="AQM58288.1"/>
    <property type="molecule type" value="Genomic_DNA"/>
</dbReference>
<dbReference type="SMR" id="P9WEU8"/>
<dbReference type="VEuPathDB" id="FungiDB:ATEG_06113"/>
<dbReference type="GO" id="GO:0005737">
    <property type="term" value="C:cytoplasm"/>
    <property type="evidence" value="ECO:0007669"/>
    <property type="project" value="TreeGrafter"/>
</dbReference>
<dbReference type="GO" id="GO:0016874">
    <property type="term" value="F:ligase activity"/>
    <property type="evidence" value="ECO:0007669"/>
    <property type="project" value="UniProtKB-KW"/>
</dbReference>
<dbReference type="GO" id="GO:0031177">
    <property type="term" value="F:phosphopantetheine binding"/>
    <property type="evidence" value="ECO:0007669"/>
    <property type="project" value="TreeGrafter"/>
</dbReference>
<dbReference type="GO" id="GO:0043041">
    <property type="term" value="P:amino acid activation for nonribosomal peptide biosynthetic process"/>
    <property type="evidence" value="ECO:0007669"/>
    <property type="project" value="TreeGrafter"/>
</dbReference>
<dbReference type="GO" id="GO:0044550">
    <property type="term" value="P:secondary metabolite biosynthetic process"/>
    <property type="evidence" value="ECO:0007669"/>
    <property type="project" value="TreeGrafter"/>
</dbReference>
<dbReference type="CDD" id="cd05918">
    <property type="entry name" value="A_NRPS_SidN3_like"/>
    <property type="match status" value="1"/>
</dbReference>
<dbReference type="CDD" id="cd19542">
    <property type="entry name" value="CT_NRPS-like"/>
    <property type="match status" value="1"/>
</dbReference>
<dbReference type="Gene3D" id="3.30.300.30">
    <property type="match status" value="1"/>
</dbReference>
<dbReference type="Gene3D" id="1.10.1200.10">
    <property type="entry name" value="ACP-like"/>
    <property type="match status" value="1"/>
</dbReference>
<dbReference type="Gene3D" id="3.30.559.10">
    <property type="entry name" value="Chloramphenicol acetyltransferase-like domain"/>
    <property type="match status" value="1"/>
</dbReference>
<dbReference type="Gene3D" id="3.40.50.12780">
    <property type="entry name" value="N-terminal domain of ligase-like"/>
    <property type="match status" value="1"/>
</dbReference>
<dbReference type="Gene3D" id="3.30.559.30">
    <property type="entry name" value="Nonribosomal peptide synthetase, condensation domain"/>
    <property type="match status" value="1"/>
</dbReference>
<dbReference type="InterPro" id="IPR010071">
    <property type="entry name" value="AA_adenyl_dom"/>
</dbReference>
<dbReference type="InterPro" id="IPR036736">
    <property type="entry name" value="ACP-like_sf"/>
</dbReference>
<dbReference type="InterPro" id="IPR045851">
    <property type="entry name" value="AMP-bd_C_sf"/>
</dbReference>
<dbReference type="InterPro" id="IPR000873">
    <property type="entry name" value="AMP-dep_synth/lig_dom"/>
</dbReference>
<dbReference type="InterPro" id="IPR042099">
    <property type="entry name" value="ANL_N_sf"/>
</dbReference>
<dbReference type="InterPro" id="IPR023213">
    <property type="entry name" value="CAT-like_dom_sf"/>
</dbReference>
<dbReference type="InterPro" id="IPR001242">
    <property type="entry name" value="Condensatn"/>
</dbReference>
<dbReference type="InterPro" id="IPR009081">
    <property type="entry name" value="PP-bd_ACP"/>
</dbReference>
<dbReference type="InterPro" id="IPR006162">
    <property type="entry name" value="Ppantetheine_attach_site"/>
</dbReference>
<dbReference type="NCBIfam" id="TIGR01733">
    <property type="entry name" value="AA-adenyl-dom"/>
    <property type="match status" value="1"/>
</dbReference>
<dbReference type="PANTHER" id="PTHR45527:SF16">
    <property type="entry name" value="NONRIBOSOMAL PEPTIDE SYNTHASE ATNA-RELATED"/>
    <property type="match status" value="1"/>
</dbReference>
<dbReference type="PANTHER" id="PTHR45527">
    <property type="entry name" value="NONRIBOSOMAL PEPTIDE SYNTHETASE"/>
    <property type="match status" value="1"/>
</dbReference>
<dbReference type="Pfam" id="PF00501">
    <property type="entry name" value="AMP-binding"/>
    <property type="match status" value="1"/>
</dbReference>
<dbReference type="Pfam" id="PF00668">
    <property type="entry name" value="Condensation"/>
    <property type="match status" value="1"/>
</dbReference>
<dbReference type="Pfam" id="PF00550">
    <property type="entry name" value="PP-binding"/>
    <property type="match status" value="1"/>
</dbReference>
<dbReference type="SUPFAM" id="SSF56801">
    <property type="entry name" value="Acetyl-CoA synthetase-like"/>
    <property type="match status" value="1"/>
</dbReference>
<dbReference type="SUPFAM" id="SSF47336">
    <property type="entry name" value="ACP-like"/>
    <property type="match status" value="1"/>
</dbReference>
<dbReference type="SUPFAM" id="SSF52777">
    <property type="entry name" value="CoA-dependent acyltransferases"/>
    <property type="match status" value="2"/>
</dbReference>
<dbReference type="PROSITE" id="PS50075">
    <property type="entry name" value="CARRIER"/>
    <property type="match status" value="1"/>
</dbReference>
<dbReference type="PROSITE" id="PS00012">
    <property type="entry name" value="PHOSPHOPANTETHEINE"/>
    <property type="match status" value="1"/>
</dbReference>
<name>BENY_ASPTE</name>
<reference key="1">
    <citation type="journal article" date="2017" name="Nat. Chem. Biol.">
        <title>A scalable platform to identify fungal secondary metabolites and their gene clusters.</title>
        <authorList>
            <person name="Clevenger K.D."/>
            <person name="Bok J.W."/>
            <person name="Ye R."/>
            <person name="Miley G.P."/>
            <person name="Verdan M.H."/>
            <person name="Velk T."/>
            <person name="Chen C."/>
            <person name="Yang K."/>
            <person name="Robey M.T."/>
            <person name="Gao P."/>
            <person name="Lamprecht M."/>
            <person name="Thomas P.M."/>
            <person name="Islam M.N."/>
            <person name="Palmer J.M."/>
            <person name="Wu C.C."/>
            <person name="Keller N.P."/>
            <person name="Kelleher N.L."/>
        </authorList>
    </citation>
    <scope>NUCLEOTIDE SEQUENCE [GENOMIC DNA]</scope>
    <scope>FUNCTION</scope>
    <scope>DISRUPTION PHENOTYPE</scope>
    <scope>PATHWAY</scope>
    <source>
        <strain>ATCC 20542 / MF4845</strain>
    </source>
</reference>
<sequence length="1110" mass="121887">MVSRKPALAVKELGCISDRDLRQLQRWNLRAATPATDQLMHEIIHQRALEFPEKIAVEAWNGTFTYQQLDRLASHLASCLASRGIGSNDFVPISFHKSRWAIVAMLAVNKSGAAFVPVDPSLPAGRVIHILRQTEARVALACDKRSTAMSEAGISVITVADSMDCEHLDKPLWSPSFPGHNAPAYCLFTSGSTGEPKGCVVGHAAFASIASHSQSAYIHSGSRVLQFASLGFGMGLFEVFCTLSTGATLCIPSDEDRMNCLAHAMTSMNVTWTILSPTTLSTLSPADMDCLVTVVTGGEPLSESQVTVWAPHVRLLQLYGLTECSGMFTVSDQIFSSDNPERNIGYPISGRCWIADPQDHHRLRAIGAVGELLIDTPNLAQNYLHNPAKTAAAFISPPGWIEDQLPARQSRPAVLYKTGDLARFNLDGSICHLGRKDHQLKVRGQRVEPGELEHHLRQLFPAVGDVVVDMACPVEANGVASLTAFILQENECSDDLFVEPTEAFLECVQSVRQSLTKIVPAYMIPNLFLRLGTMPKTVSGKKDRRRLRQEVGLLTWDRLRKYMTVDNARGRAAHTLETESEKILAQIWADLLHLDVGTLGPEDDILALGADSITAMRAVAMARIRGLGLTVSDIFATPTLAEMAQSARVVPTTAVTTHRSVSLVDDNVRELCLSHLREQTSLLDSDEQTPLILPATGMQKFFLDRSSFDYFAYILDGDVDFDRMQAACTTAVNQHSILRTVFVQNASGIFQVTLSSIPTALYHITTARNVADVSEKLWSPNTSKTVTLDHPATRFMLVSNPDAQQHALILRLSHSQYDGLSWPNLVGAIAATYNGSALSPCLQFSDYIRCRYQQDTTAGYNFWRRYLLGYTPTHMRDCTFEATTQSKAVSTDSDAVNVHHTIPSPPDTPDGITMATLIKAAGALVLGQLTRRPDIVIGQTVHGRSSLPLAGIETILGPCLNFVPIHVQIHPTWTAERFLHHVQDSHIQTTAYDYLELADIIEQSTSWAPGTSLGAIFHHQNIDTKMEISLQGMKNSKTIHHLTGSYIHQQMRSEVWVYSMPVDQGLEISIRGSSHVISAPQADELARKLGAFVQTLARHPEQALVNIMAP</sequence>
<protein>
    <recommendedName>
        <fullName evidence="4">Nonribisomal peptide synthetase benY</fullName>
        <shortName evidence="4">NRPS benY</shortName>
        <ecNumber evidence="6">6.3.1.-</ecNumber>
    </recommendedName>
    <alternativeName>
        <fullName evidence="4">Benzomalvin biosynthesis cluster protein Y</fullName>
    </alternativeName>
</protein>
<feature type="chain" id="PRO_0000450604" description="Nonribisomal peptide synthetase benY">
    <location>
        <begin position="1"/>
        <end position="1110"/>
    </location>
</feature>
<feature type="domain" description="Carrier" evidence="2 6">
    <location>
        <begin position="575"/>
        <end position="651"/>
    </location>
</feature>
<feature type="region of interest" description="Adenylation" evidence="1 6">
    <location>
        <begin position="47"/>
        <end position="443"/>
    </location>
</feature>
<feature type="region of interest" description="Condensation" evidence="1 6">
    <location>
        <begin position="713"/>
        <end position="1025"/>
    </location>
</feature>
<feature type="modified residue" description="O-(pantetheine 4'-phosphoryl)serine" evidence="2">
    <location>
        <position position="612"/>
    </location>
</feature>
<gene>
    <name evidence="4" type="primary">benY</name>
</gene>
<organism>
    <name type="scientific">Aspergillus terreus</name>
    <dbReference type="NCBI Taxonomy" id="33178"/>
    <lineage>
        <taxon>Eukaryota</taxon>
        <taxon>Fungi</taxon>
        <taxon>Dikarya</taxon>
        <taxon>Ascomycota</taxon>
        <taxon>Pezizomycotina</taxon>
        <taxon>Eurotiomycetes</taxon>
        <taxon>Eurotiomycetidae</taxon>
        <taxon>Eurotiales</taxon>
        <taxon>Aspergillaceae</taxon>
        <taxon>Aspergillus</taxon>
        <taxon>Aspergillus subgen. Circumdati</taxon>
    </lineage>
</organism>
<accession>P9WEU8</accession>
<proteinExistence type="inferred from homology"/>